<keyword id="KW-1185">Reference proteome</keyword>
<gene>
    <name type="ORF">zgc:112255</name>
</gene>
<dbReference type="EMBL" id="BC095706">
    <property type="protein sequence ID" value="AAH95706.1"/>
    <property type="molecule type" value="mRNA"/>
</dbReference>
<dbReference type="RefSeq" id="NP_001018505.1">
    <property type="nucleotide sequence ID" value="NM_001020669.1"/>
</dbReference>
<dbReference type="SMR" id="Q502G5"/>
<dbReference type="FunCoup" id="Q502G5">
    <property type="interactions" value="1387"/>
</dbReference>
<dbReference type="STRING" id="7955.ENSDARP00000129427"/>
<dbReference type="PaxDb" id="7955-ENSDARP00000129427"/>
<dbReference type="GeneID" id="553695"/>
<dbReference type="KEGG" id="dre:553695"/>
<dbReference type="AGR" id="ZFIN:ZDB-GENE-050522-57"/>
<dbReference type="ZFIN" id="ZDB-GENE-050522-57">
    <property type="gene designation" value="zgc:112255"/>
</dbReference>
<dbReference type="eggNOG" id="ENOG502QWKE">
    <property type="taxonomic scope" value="Eukaryota"/>
</dbReference>
<dbReference type="InParanoid" id="Q502G5"/>
<dbReference type="OrthoDB" id="9995764at2759"/>
<dbReference type="PhylomeDB" id="Q502G5"/>
<dbReference type="PRO" id="PR:Q502G5"/>
<dbReference type="Proteomes" id="UP000000437">
    <property type="component" value="Chromosome 11"/>
</dbReference>
<dbReference type="InterPro" id="IPR019534">
    <property type="entry name" value="DUF2452"/>
</dbReference>
<dbReference type="PANTHER" id="PTHR14553:SF1">
    <property type="entry name" value="SIMILAR TO CHROMOSOME 1 OPEN READING FRAME 50"/>
    <property type="match status" value="1"/>
</dbReference>
<dbReference type="PANTHER" id="PTHR14553">
    <property type="entry name" value="UNCHARACTERIZED PROTEIN C1ORF50"/>
    <property type="match status" value="1"/>
</dbReference>
<dbReference type="Pfam" id="PF10504">
    <property type="entry name" value="DUF2452"/>
    <property type="match status" value="1"/>
</dbReference>
<name>CA050_DANRE</name>
<proteinExistence type="evidence at transcript level"/>
<sequence>MDRSVSLPHQPNKTTTVTLVETSSNPSGMVLVSPYQTNRVGDPMDLVSLAQQVQKGDEFIRANACNRLTVIADQIRYLQEQARKVLEDARKDAELHHAACNVVKKPGNMYYLYMRESGQRYFSILSPREWGASCPHKFLGGYKLQHDMSWTPQEDVEKRDAEIGIMDKLLNRQTALPACTEPNFEGLSQ</sequence>
<feature type="chain" id="PRO_0000251191" description="Uncharacterized protein C1orf50 homolog">
    <location>
        <begin position="1"/>
        <end position="189"/>
    </location>
</feature>
<accession>Q502G5</accession>
<protein>
    <recommendedName>
        <fullName>Uncharacterized protein C1orf50 homolog</fullName>
    </recommendedName>
</protein>
<reference key="1">
    <citation type="submission" date="2005-05" db="EMBL/GenBank/DDBJ databases">
        <authorList>
            <consortium name="NIH - Zebrafish Gene Collection (ZGC) project"/>
        </authorList>
    </citation>
    <scope>NUCLEOTIDE SEQUENCE [LARGE SCALE MRNA]</scope>
    <source>
        <tissue>Ovary</tissue>
    </source>
</reference>
<organism>
    <name type="scientific">Danio rerio</name>
    <name type="common">Zebrafish</name>
    <name type="synonym">Brachydanio rerio</name>
    <dbReference type="NCBI Taxonomy" id="7955"/>
    <lineage>
        <taxon>Eukaryota</taxon>
        <taxon>Metazoa</taxon>
        <taxon>Chordata</taxon>
        <taxon>Craniata</taxon>
        <taxon>Vertebrata</taxon>
        <taxon>Euteleostomi</taxon>
        <taxon>Actinopterygii</taxon>
        <taxon>Neopterygii</taxon>
        <taxon>Teleostei</taxon>
        <taxon>Ostariophysi</taxon>
        <taxon>Cypriniformes</taxon>
        <taxon>Danionidae</taxon>
        <taxon>Danioninae</taxon>
        <taxon>Danio</taxon>
    </lineage>
</organism>